<feature type="peptide" id="PRO_0000394427" description="Caerulein 1.1" evidence="2">
    <location>
        <begin position="1"/>
        <end position="10"/>
    </location>
</feature>
<feature type="modified residue" description="Pyrrolidone carboxylic acid" evidence="2">
    <location>
        <position position="1"/>
    </location>
</feature>
<feature type="modified residue" description="Sulfotyrosine" evidence="2">
    <location>
        <position position="4"/>
    </location>
</feature>
<feature type="modified residue" description="Phenylalanine amide" evidence="2">
    <location>
        <position position="10"/>
    </location>
</feature>
<sequence>QQDYTGWMDF</sequence>
<organism>
    <name type="scientific">Litoria rothii</name>
    <name type="common">Roth's tree frog</name>
    <name type="synonym">Hyla rothii</name>
    <dbReference type="NCBI Taxonomy" id="336074"/>
    <lineage>
        <taxon>Eukaryota</taxon>
        <taxon>Metazoa</taxon>
        <taxon>Chordata</taxon>
        <taxon>Craniata</taxon>
        <taxon>Vertebrata</taxon>
        <taxon>Euteleostomi</taxon>
        <taxon>Amphibia</taxon>
        <taxon>Batrachia</taxon>
        <taxon>Anura</taxon>
        <taxon>Neobatrachia</taxon>
        <taxon>Hyloidea</taxon>
        <taxon>Hylidae</taxon>
        <taxon>Pelodryadinae</taxon>
        <taxon>Litoria</taxon>
    </lineage>
</organism>
<dbReference type="GO" id="GO:0005576">
    <property type="term" value="C:extracellular region"/>
    <property type="evidence" value="ECO:0000314"/>
    <property type="project" value="UniProtKB"/>
</dbReference>
<dbReference type="GO" id="GO:0006952">
    <property type="term" value="P:defense response"/>
    <property type="evidence" value="ECO:0007669"/>
    <property type="project" value="UniProtKB-KW"/>
</dbReference>
<dbReference type="GO" id="GO:0045987">
    <property type="term" value="P:positive regulation of smooth muscle contraction"/>
    <property type="evidence" value="ECO:0000314"/>
    <property type="project" value="UniProtKB"/>
</dbReference>
<dbReference type="InterPro" id="IPR013152">
    <property type="entry name" value="Gastrin/cholecystokinin_CS"/>
</dbReference>
<dbReference type="PROSITE" id="PS00259">
    <property type="entry name" value="GASTRIN"/>
    <property type="match status" value="1"/>
</dbReference>
<accession>P86506</accession>
<reference evidence="5" key="1">
    <citation type="journal article" date="2005" name="Rapid Commun. Mass Spectrom.">
        <title>The rothein peptides from the skin secretion of Roth's tree frog Litoria rothii. Sequence determination using positive and negative ion electrospray mass spectrometry.</title>
        <authorList>
            <person name="Brinkworth C.S."/>
            <person name="Bowie J.H."/>
            <person name="Bilusich D."/>
            <person name="Tyler M.J."/>
        </authorList>
    </citation>
    <scope>PROTEIN SEQUENCE</scope>
    <scope>FUNCTION</scope>
    <scope>IDENTIFICATION BY MASS SPECTROMETRY</scope>
    <scope>SUBCELLULAR LOCATION</scope>
    <scope>TISSUE SPECIFICITY</scope>
    <scope>PYROGLUTAMATE FORMATION AT GLN-1</scope>
    <scope>SULFATION AT TYR-4</scope>
    <scope>AMIDATION AT PHE-10</scope>
    <source>
        <tissue evidence="2">Skin secretion</tissue>
    </source>
</reference>
<reference evidence="5" key="2">
    <citation type="journal article" date="2009" name="Toxicon">
        <title>Activities of seasonably variable caerulein and rothein skin peptides from the tree frogs Litoria splendida and Litoria rothii.</title>
        <authorList>
            <person name="Sherman P.J."/>
            <person name="Jackway R.J."/>
            <person name="Nicholson E."/>
            <person name="Musgrave I.F."/>
            <person name="Boontheung P."/>
            <person name="Bowie J.H."/>
        </authorList>
    </citation>
    <scope>FUNCTION</scope>
    <scope>DEVELOPMENTAL STAGE</scope>
</reference>
<comment type="function">
    <text evidence="2 3">Induces contraction of intestinal smooth muscle in isolated guinea pig ileum.</text>
</comment>
<comment type="subcellular location">
    <subcellularLocation>
        <location evidence="2">Secreted</location>
    </subcellularLocation>
</comment>
<comment type="tissue specificity">
    <text evidence="2">Expressed by the skin dorsal glands.</text>
</comment>
<comment type="developmental stage">
    <text evidence="3">Expressed during summer and winter.</text>
</comment>
<comment type="similarity">
    <text evidence="1">Belongs to the gastrin/cholecystokinin family.</text>
</comment>
<keyword id="KW-0027">Amidation</keyword>
<keyword id="KW-0878">Amphibian defense peptide</keyword>
<keyword id="KW-0903">Direct protein sequencing</keyword>
<keyword id="KW-0873">Pyrrolidone carboxylic acid</keyword>
<keyword id="KW-0964">Secreted</keyword>
<keyword id="KW-0765">Sulfation</keyword>
<name>CAE11_LITRO</name>
<evidence type="ECO:0000255" key="1"/>
<evidence type="ECO:0000269" key="2">
    <source>
    </source>
</evidence>
<evidence type="ECO:0000269" key="3">
    <source>
    </source>
</evidence>
<evidence type="ECO:0000303" key="4">
    <source>
    </source>
</evidence>
<evidence type="ECO:0000305" key="5"/>
<proteinExistence type="evidence at protein level"/>
<protein>
    <recommendedName>
        <fullName evidence="4">Caerulein 1.1</fullName>
    </recommendedName>
</protein>